<reference key="1">
    <citation type="journal article" date="2005" name="Nature">
        <title>Genomic sequence of the pathogenic and allergenic filamentous fungus Aspergillus fumigatus.</title>
        <authorList>
            <person name="Nierman W.C."/>
            <person name="Pain A."/>
            <person name="Anderson M.J."/>
            <person name="Wortman J.R."/>
            <person name="Kim H.S."/>
            <person name="Arroyo J."/>
            <person name="Berriman M."/>
            <person name="Abe K."/>
            <person name="Archer D.B."/>
            <person name="Bermejo C."/>
            <person name="Bennett J.W."/>
            <person name="Bowyer P."/>
            <person name="Chen D."/>
            <person name="Collins M."/>
            <person name="Coulsen R."/>
            <person name="Davies R."/>
            <person name="Dyer P.S."/>
            <person name="Farman M.L."/>
            <person name="Fedorova N."/>
            <person name="Fedorova N.D."/>
            <person name="Feldblyum T.V."/>
            <person name="Fischer R."/>
            <person name="Fosker N."/>
            <person name="Fraser A."/>
            <person name="Garcia J.L."/>
            <person name="Garcia M.J."/>
            <person name="Goble A."/>
            <person name="Goldman G.H."/>
            <person name="Gomi K."/>
            <person name="Griffith-Jones S."/>
            <person name="Gwilliam R."/>
            <person name="Haas B.J."/>
            <person name="Haas H."/>
            <person name="Harris D.E."/>
            <person name="Horiuchi H."/>
            <person name="Huang J."/>
            <person name="Humphray S."/>
            <person name="Jimenez J."/>
            <person name="Keller N."/>
            <person name="Khouri H."/>
            <person name="Kitamoto K."/>
            <person name="Kobayashi T."/>
            <person name="Konzack S."/>
            <person name="Kulkarni R."/>
            <person name="Kumagai T."/>
            <person name="Lafton A."/>
            <person name="Latge J.-P."/>
            <person name="Li W."/>
            <person name="Lord A."/>
            <person name="Lu C."/>
            <person name="Majoros W.H."/>
            <person name="May G.S."/>
            <person name="Miller B.L."/>
            <person name="Mohamoud Y."/>
            <person name="Molina M."/>
            <person name="Monod M."/>
            <person name="Mouyna I."/>
            <person name="Mulligan S."/>
            <person name="Murphy L.D."/>
            <person name="O'Neil S."/>
            <person name="Paulsen I."/>
            <person name="Penalva M.A."/>
            <person name="Pertea M."/>
            <person name="Price C."/>
            <person name="Pritchard B.L."/>
            <person name="Quail M.A."/>
            <person name="Rabbinowitsch E."/>
            <person name="Rawlins N."/>
            <person name="Rajandream M.A."/>
            <person name="Reichard U."/>
            <person name="Renauld H."/>
            <person name="Robson G.D."/>
            <person name="Rodriguez de Cordoba S."/>
            <person name="Rodriguez-Pena J.M."/>
            <person name="Ronning C.M."/>
            <person name="Rutter S."/>
            <person name="Salzberg S.L."/>
            <person name="Sanchez M."/>
            <person name="Sanchez-Ferrero J.C."/>
            <person name="Saunders D."/>
            <person name="Seeger K."/>
            <person name="Squares R."/>
            <person name="Squares S."/>
            <person name="Takeuchi M."/>
            <person name="Tekaia F."/>
            <person name="Turner G."/>
            <person name="Vazquez de Aldana C.R."/>
            <person name="Weidman J."/>
            <person name="White O."/>
            <person name="Woodward J.R."/>
            <person name="Yu J.-H."/>
            <person name="Fraser C.M."/>
            <person name="Galagan J.E."/>
            <person name="Asai K."/>
            <person name="Machida M."/>
            <person name="Hall N."/>
            <person name="Barrell B.G."/>
            <person name="Denning D.W."/>
        </authorList>
    </citation>
    <scope>NUCLEOTIDE SEQUENCE [LARGE SCALE GENOMIC DNA]</scope>
    <source>
        <strain>ATCC MYA-4609 / CBS 101355 / FGSC A1100 / Af293</strain>
    </source>
</reference>
<gene>
    <name type="primary">spc24</name>
    <name type="ORF">AFUA_2G13330</name>
</gene>
<feature type="chain" id="PRO_0000246658" description="Probable kinetochore protein spc24">
    <location>
        <begin position="1"/>
        <end position="200"/>
    </location>
</feature>
<feature type="coiled-coil region" evidence="3">
    <location>
        <begin position="39"/>
        <end position="129"/>
    </location>
</feature>
<protein>
    <recommendedName>
        <fullName>Probable kinetochore protein spc24</fullName>
    </recommendedName>
</protein>
<keyword id="KW-0131">Cell cycle</keyword>
<keyword id="KW-0132">Cell division</keyword>
<keyword id="KW-0137">Centromere</keyword>
<keyword id="KW-0158">Chromosome</keyword>
<keyword id="KW-0175">Coiled coil</keyword>
<keyword id="KW-0963">Cytoplasm</keyword>
<keyword id="KW-0206">Cytoskeleton</keyword>
<keyword id="KW-0995">Kinetochore</keyword>
<keyword id="KW-0498">Mitosis</keyword>
<keyword id="KW-0539">Nucleus</keyword>
<keyword id="KW-1185">Reference proteome</keyword>
<proteinExistence type="inferred from homology"/>
<name>SPC24_ASPFU</name>
<organism>
    <name type="scientific">Aspergillus fumigatus (strain ATCC MYA-4609 / CBS 101355 / FGSC A1100 / Af293)</name>
    <name type="common">Neosartorya fumigata</name>
    <dbReference type="NCBI Taxonomy" id="330879"/>
    <lineage>
        <taxon>Eukaryota</taxon>
        <taxon>Fungi</taxon>
        <taxon>Dikarya</taxon>
        <taxon>Ascomycota</taxon>
        <taxon>Pezizomycotina</taxon>
        <taxon>Eurotiomycetes</taxon>
        <taxon>Eurotiomycetidae</taxon>
        <taxon>Eurotiales</taxon>
        <taxon>Aspergillaceae</taxon>
        <taxon>Aspergillus</taxon>
        <taxon>Aspergillus subgen. Fumigati</taxon>
    </lineage>
</organism>
<sequence>MLLDEDPATLIHHTIGNFNIQPDKQAVTRINDSLSTLQQSRELRMRDAESALRKLSRNLHALTAQHEEAVSSHDSAKHAAQMVELDTKKFRIAKAATELEIESERLEGELEMLKERLAELEAQGLEGDEATRREREADDATILRLKIYRSLGIDIEADEAGNFSKAVIRNSRKGDVHVVNMDPKFSRFFYANYFWSTMQG</sequence>
<accession>Q4X0I7</accession>
<evidence type="ECO:0000250" key="1"/>
<evidence type="ECO:0000250" key="2">
    <source>
        <dbReference type="UniProtKB" id="Q9UST6"/>
    </source>
</evidence>
<evidence type="ECO:0000255" key="3"/>
<evidence type="ECO:0000305" key="4"/>
<dbReference type="EMBL" id="AAHF01000001">
    <property type="protein sequence ID" value="EAL93628.1"/>
    <property type="status" value="ALT_SEQ"/>
    <property type="molecule type" value="Genomic_DNA"/>
</dbReference>
<dbReference type="RefSeq" id="XP_755666.1">
    <property type="nucleotide sequence ID" value="XM_750573.1"/>
</dbReference>
<dbReference type="SMR" id="Q4X0I7"/>
<dbReference type="FunCoup" id="Q4X0I7">
    <property type="interactions" value="94"/>
</dbReference>
<dbReference type="STRING" id="330879.Q4X0I7"/>
<dbReference type="GeneID" id="3513168"/>
<dbReference type="KEGG" id="afm:AFUA_2G13330"/>
<dbReference type="VEuPathDB" id="FungiDB:Afu2g13330"/>
<dbReference type="eggNOG" id="ENOG502S52R">
    <property type="taxonomic scope" value="Eukaryota"/>
</dbReference>
<dbReference type="HOGENOM" id="CLU_091441_1_1_1"/>
<dbReference type="InParanoid" id="Q4X0I7"/>
<dbReference type="OrthoDB" id="3344830at2759"/>
<dbReference type="Proteomes" id="UP000002530">
    <property type="component" value="Chromosome 2"/>
</dbReference>
<dbReference type="GO" id="GO:0005737">
    <property type="term" value="C:cytoplasm"/>
    <property type="evidence" value="ECO:0007669"/>
    <property type="project" value="UniProtKB-KW"/>
</dbReference>
<dbReference type="GO" id="GO:0031262">
    <property type="term" value="C:Ndc80 complex"/>
    <property type="evidence" value="ECO:0000250"/>
    <property type="project" value="UniProtKB"/>
</dbReference>
<dbReference type="GO" id="GO:0005634">
    <property type="term" value="C:nucleus"/>
    <property type="evidence" value="ECO:0007669"/>
    <property type="project" value="UniProtKB-SubCell"/>
</dbReference>
<dbReference type="GO" id="GO:0005816">
    <property type="term" value="C:spindle pole body"/>
    <property type="evidence" value="ECO:0007669"/>
    <property type="project" value="UniProtKB-SubCell"/>
</dbReference>
<dbReference type="GO" id="GO:0051301">
    <property type="term" value="P:cell division"/>
    <property type="evidence" value="ECO:0007669"/>
    <property type="project" value="UniProtKB-KW"/>
</dbReference>
<dbReference type="GO" id="GO:0007059">
    <property type="term" value="P:chromosome segregation"/>
    <property type="evidence" value="ECO:0000318"/>
    <property type="project" value="GO_Central"/>
</dbReference>
<dbReference type="GO" id="GO:0031134">
    <property type="term" value="P:sister chromatid biorientation"/>
    <property type="evidence" value="ECO:0000250"/>
    <property type="project" value="UniProtKB"/>
</dbReference>
<dbReference type="CDD" id="cd11565">
    <property type="entry name" value="RWD_Spc24"/>
    <property type="match status" value="1"/>
</dbReference>
<dbReference type="Gene3D" id="3.30.160.430">
    <property type="match status" value="1"/>
</dbReference>
<dbReference type="InterPro" id="IPR013252">
    <property type="entry name" value="Ndc80_Spc24"/>
</dbReference>
<dbReference type="InterPro" id="IPR038066">
    <property type="entry name" value="Spc24_Fungi_globular_sf"/>
</dbReference>
<dbReference type="PANTHER" id="PTHR22142">
    <property type="match status" value="1"/>
</dbReference>
<dbReference type="PANTHER" id="PTHR22142:SF2">
    <property type="entry name" value="KINETOCHORE PROTEIN SPC24"/>
    <property type="match status" value="1"/>
</dbReference>
<dbReference type="Pfam" id="PF08286">
    <property type="entry name" value="Spc24"/>
    <property type="match status" value="1"/>
</dbReference>
<dbReference type="SUPFAM" id="SSF143026">
    <property type="entry name" value="Kinetochore globular domain"/>
    <property type="match status" value="1"/>
</dbReference>
<comment type="function">
    <text evidence="1">Acts as a component of the essential kinetochore-associated NDC80 complex, which is required for chromosome segregation and spindle checkpoint activity.</text>
</comment>
<comment type="subunit">
    <text evidence="1">Component of the NDC80 complex, which consists of at least ndc80, nuf2 and spc24.</text>
</comment>
<comment type="subcellular location">
    <subcellularLocation>
        <location evidence="2">Nucleus</location>
    </subcellularLocation>
    <subcellularLocation>
        <location evidence="2">Chromosome</location>
        <location evidence="2">Centromere</location>
        <location evidence="2">Kinetochore</location>
    </subcellularLocation>
    <subcellularLocation>
        <location evidence="2">Cytoplasm</location>
        <location evidence="2">Cytoskeleton</location>
        <location evidence="2">Microtubule organizing center</location>
        <location evidence="2">Spindle pole body</location>
    </subcellularLocation>
    <text evidence="2">Associated with kinetochores.</text>
</comment>
<comment type="similarity">
    <text evidence="4">Belongs to the SPC24 family.</text>
</comment>
<comment type="sequence caution" evidence="4">
    <conflict type="erroneous gene model prediction">
        <sequence resource="EMBL-CDS" id="EAL93628"/>
    </conflict>
</comment>